<gene>
    <name evidence="1" type="primary">Exoc1l</name>
    <name evidence="1" type="synonym">Gm7271</name>
</gene>
<keyword id="KW-1185">Reference proteome</keyword>
<sequence>MSSLVKEDLEKKLFKPLAQNLCEFIEIEVSVQDRYFLCVSVTKTDEVKITMVKHYRVGLDEKYEVTKRWSLSDLRMIDGKEADTDNPFFDLHFKKVYSLEAYSCASKYSFARTVSRLNHVYLKKDLHMVNFDSTYINDDSIWSSNNKDCLVLMRICFYAFNLVCLSLCPLPL</sequence>
<reference key="1">
    <citation type="journal article" date="2009" name="PLoS Biol.">
        <title>Lineage-specific biology revealed by a finished genome assembly of the mouse.</title>
        <authorList>
            <person name="Church D.M."/>
            <person name="Goodstadt L."/>
            <person name="Hillier L.W."/>
            <person name="Zody M.C."/>
            <person name="Goldstein S."/>
            <person name="She X."/>
            <person name="Bult C.J."/>
            <person name="Agarwala R."/>
            <person name="Cherry J.L."/>
            <person name="DiCuccio M."/>
            <person name="Hlavina W."/>
            <person name="Kapustin Y."/>
            <person name="Meric P."/>
            <person name="Maglott D."/>
            <person name="Birtle Z."/>
            <person name="Marques A.C."/>
            <person name="Graves T."/>
            <person name="Zhou S."/>
            <person name="Teague B."/>
            <person name="Potamousis K."/>
            <person name="Churas C."/>
            <person name="Place M."/>
            <person name="Herschleb J."/>
            <person name="Runnheim R."/>
            <person name="Forrest D."/>
            <person name="Amos-Landgraf J."/>
            <person name="Schwartz D.C."/>
            <person name="Cheng Z."/>
            <person name="Lindblad-Toh K."/>
            <person name="Eichler E.E."/>
            <person name="Ponting C.P."/>
        </authorList>
    </citation>
    <scope>NUCLEOTIDE SEQUENCE [LARGE SCALE GENOMIC DNA]</scope>
    <source>
        <strain>C57BL/6J</strain>
    </source>
</reference>
<reference key="2">
    <citation type="journal article" date="2004" name="Genome Res.">
        <title>The status, quality, and expansion of the NIH full-length cDNA project: the Mammalian Gene Collection (MGC).</title>
        <authorList>
            <consortium name="The MGC Project Team"/>
        </authorList>
    </citation>
    <scope>NUCLEOTIDE SEQUENCE [LARGE SCALE MRNA]</scope>
</reference>
<name>EXC1L_MOUSE</name>
<evidence type="ECO:0000312" key="1">
    <source>
        <dbReference type="MGI" id="MGI:3647743"/>
    </source>
</evidence>
<accession>B9EK06</accession>
<proteinExistence type="evidence at transcript level"/>
<protein>
    <recommendedName>
        <fullName evidence="1">Exocyst complex component 1-like</fullName>
    </recommendedName>
</protein>
<dbReference type="EMBL" id="AC127332">
    <property type="status" value="NOT_ANNOTATED_CDS"/>
    <property type="molecule type" value="Genomic_DNA"/>
</dbReference>
<dbReference type="EMBL" id="AC133184">
    <property type="status" value="NOT_ANNOTATED_CDS"/>
    <property type="molecule type" value="Genomic_DNA"/>
</dbReference>
<dbReference type="EMBL" id="BC147734">
    <property type="protein sequence ID" value="AAI47735.1"/>
    <property type="molecule type" value="mRNA"/>
</dbReference>
<dbReference type="SMR" id="B9EK06"/>
<dbReference type="STRING" id="10090.ENSMUSP00000147216"/>
<dbReference type="Ensembl" id="ENSMUST00000172369.2">
    <property type="protein sequence ID" value="ENSMUSP00000146625.2"/>
    <property type="gene ID" value="ENSMUSG00000091204.9"/>
</dbReference>
<dbReference type="Ensembl" id="ENSMUST00000191515.8">
    <property type="protein sequence ID" value="ENSMUSP00000147216.2"/>
    <property type="gene ID" value="ENSMUSG00000091204.9"/>
</dbReference>
<dbReference type="UCSC" id="uc012dxn.1">
    <property type="organism name" value="mouse"/>
</dbReference>
<dbReference type="AGR" id="MGI:3647743"/>
<dbReference type="MGI" id="MGI:3647743">
    <property type="gene designation" value="Exoc1l"/>
</dbReference>
<dbReference type="VEuPathDB" id="HostDB:ENSMUSG00000091204"/>
<dbReference type="GeneTree" id="ENSGT00940000162193"/>
<dbReference type="InParanoid" id="B9EK06"/>
<dbReference type="OMA" id="EVEICMV"/>
<dbReference type="OrthoDB" id="8734520at2759"/>
<dbReference type="PhylomeDB" id="B9EK06"/>
<dbReference type="TreeFam" id="TF343591"/>
<dbReference type="PRO" id="PR:B9EK06"/>
<dbReference type="Proteomes" id="UP000000589">
    <property type="component" value="Chromosome 5"/>
</dbReference>
<dbReference type="RNAct" id="B9EK06">
    <property type="molecule type" value="protein"/>
</dbReference>
<dbReference type="Bgee" id="ENSMUSG00000091204">
    <property type="expression patterns" value="Expressed in primary oocyte and 13 other cell types or tissues"/>
</dbReference>
<dbReference type="FunFam" id="2.30.29.90:FF:000004">
    <property type="entry name" value="Exocyst complex component 1 like"/>
    <property type="match status" value="1"/>
</dbReference>
<dbReference type="Gene3D" id="2.30.29.90">
    <property type="match status" value="1"/>
</dbReference>
<dbReference type="InterPro" id="IPR028258">
    <property type="entry name" value="Sec3-PIP2_bind"/>
</dbReference>
<dbReference type="Pfam" id="PF15277">
    <property type="entry name" value="Sec3-PIP2_bind"/>
    <property type="match status" value="1"/>
</dbReference>
<dbReference type="SMART" id="SM01313">
    <property type="entry name" value="Sec3-PIP2_bind"/>
    <property type="match status" value="1"/>
</dbReference>
<feature type="chain" id="PRO_0000442937" description="Exocyst complex component 1-like">
    <location>
        <begin position="1"/>
        <end position="172"/>
    </location>
</feature>
<organism>
    <name type="scientific">Mus musculus</name>
    <name type="common">Mouse</name>
    <dbReference type="NCBI Taxonomy" id="10090"/>
    <lineage>
        <taxon>Eukaryota</taxon>
        <taxon>Metazoa</taxon>
        <taxon>Chordata</taxon>
        <taxon>Craniata</taxon>
        <taxon>Vertebrata</taxon>
        <taxon>Euteleostomi</taxon>
        <taxon>Mammalia</taxon>
        <taxon>Eutheria</taxon>
        <taxon>Euarchontoglires</taxon>
        <taxon>Glires</taxon>
        <taxon>Rodentia</taxon>
        <taxon>Myomorpha</taxon>
        <taxon>Muroidea</taxon>
        <taxon>Muridae</taxon>
        <taxon>Murinae</taxon>
        <taxon>Mus</taxon>
        <taxon>Mus</taxon>
    </lineage>
</organism>